<protein>
    <recommendedName>
        <fullName evidence="1">Ribitol-5-phosphate cytidylyltransferase</fullName>
        <ecNumber evidence="1">2.7.7.40</ecNumber>
    </recommendedName>
</protein>
<comment type="function">
    <text evidence="1">Catalyzes the transfer of the cytidylyl group of CTP to D-ribitol 5-phosphate.</text>
</comment>
<comment type="catalytic activity">
    <reaction evidence="1">
        <text>D-ribitol 5-phosphate + CTP + H(+) = CDP-L-ribitol + diphosphate</text>
        <dbReference type="Rhea" id="RHEA:12456"/>
        <dbReference type="ChEBI" id="CHEBI:15378"/>
        <dbReference type="ChEBI" id="CHEBI:33019"/>
        <dbReference type="ChEBI" id="CHEBI:37563"/>
        <dbReference type="ChEBI" id="CHEBI:57608"/>
        <dbReference type="ChEBI" id="CHEBI:57695"/>
        <dbReference type="EC" id="2.7.7.40"/>
    </reaction>
</comment>
<comment type="pathway">
    <text evidence="1">Cell wall biogenesis; poly(ribitol phosphate) teichoic acid biosynthesis.</text>
</comment>
<comment type="similarity">
    <text evidence="1">Belongs to the IspD/TarI cytidylyltransferase family. TarI subfamily.</text>
</comment>
<dbReference type="EC" id="2.7.7.40" evidence="1"/>
<dbReference type="EMBL" id="CP000919">
    <property type="protein sequence ID" value="ACO19595.1"/>
    <property type="molecule type" value="Genomic_DNA"/>
</dbReference>
<dbReference type="RefSeq" id="WP_000638502.1">
    <property type="nucleotide sequence ID" value="NC_012466.1"/>
</dbReference>
<dbReference type="SMR" id="C1CEM5"/>
<dbReference type="KEGG" id="sjj:SPJ_1185"/>
<dbReference type="HOGENOM" id="CLU_061281_2_3_9"/>
<dbReference type="UniPathway" id="UPA00790"/>
<dbReference type="Proteomes" id="UP000002206">
    <property type="component" value="Chromosome"/>
</dbReference>
<dbReference type="GO" id="GO:0050518">
    <property type="term" value="F:2-C-methyl-D-erythritol 4-phosphate cytidylyltransferase activity"/>
    <property type="evidence" value="ECO:0007669"/>
    <property type="project" value="TreeGrafter"/>
</dbReference>
<dbReference type="GO" id="GO:0047349">
    <property type="term" value="F:D-ribitol-5-phosphate cytidylyltransferase activity"/>
    <property type="evidence" value="ECO:0007669"/>
    <property type="project" value="UniProtKB-UniRule"/>
</dbReference>
<dbReference type="GO" id="GO:0071555">
    <property type="term" value="P:cell wall organization"/>
    <property type="evidence" value="ECO:0007669"/>
    <property type="project" value="UniProtKB-KW"/>
</dbReference>
<dbReference type="GO" id="GO:0008299">
    <property type="term" value="P:isoprenoid biosynthetic process"/>
    <property type="evidence" value="ECO:0007669"/>
    <property type="project" value="InterPro"/>
</dbReference>
<dbReference type="GO" id="GO:1902012">
    <property type="term" value="P:poly(ribitol phosphate) teichoic acid biosynthetic process"/>
    <property type="evidence" value="ECO:0007669"/>
    <property type="project" value="UniProtKB-UniRule"/>
</dbReference>
<dbReference type="CDD" id="cd02516">
    <property type="entry name" value="CDP-ME_synthetase"/>
    <property type="match status" value="1"/>
</dbReference>
<dbReference type="FunFam" id="3.90.550.10:FF:000003">
    <property type="entry name" value="2-C-methyl-D-erythritol 4-phosphate cytidylyltransferase"/>
    <property type="match status" value="1"/>
</dbReference>
<dbReference type="Gene3D" id="3.90.550.10">
    <property type="entry name" value="Spore Coat Polysaccharide Biosynthesis Protein SpsA, Chain A"/>
    <property type="match status" value="1"/>
</dbReference>
<dbReference type="HAMAP" id="MF_02068">
    <property type="entry name" value="TarI"/>
    <property type="match status" value="1"/>
</dbReference>
<dbReference type="InterPro" id="IPR034683">
    <property type="entry name" value="IspD/TarI"/>
</dbReference>
<dbReference type="InterPro" id="IPR050088">
    <property type="entry name" value="IspD/TarI_cytidylyltransf_bact"/>
</dbReference>
<dbReference type="InterPro" id="IPR018294">
    <property type="entry name" value="ISPD_synthase_CS"/>
</dbReference>
<dbReference type="InterPro" id="IPR029044">
    <property type="entry name" value="Nucleotide-diphossugar_trans"/>
</dbReference>
<dbReference type="InterPro" id="IPR034709">
    <property type="entry name" value="TarI"/>
</dbReference>
<dbReference type="NCBIfam" id="NF001183">
    <property type="entry name" value="PRK00155.1-3"/>
    <property type="match status" value="1"/>
</dbReference>
<dbReference type="PANTHER" id="PTHR32125">
    <property type="entry name" value="2-C-METHYL-D-ERYTHRITOL 4-PHOSPHATE CYTIDYLYLTRANSFERASE, CHLOROPLASTIC"/>
    <property type="match status" value="1"/>
</dbReference>
<dbReference type="PANTHER" id="PTHR32125:SF8">
    <property type="entry name" value="RIBITOL-5-PHOSPHATE CYTIDYLYLTRANSFERASE"/>
    <property type="match status" value="1"/>
</dbReference>
<dbReference type="Pfam" id="PF01128">
    <property type="entry name" value="IspD"/>
    <property type="match status" value="1"/>
</dbReference>
<dbReference type="SUPFAM" id="SSF53448">
    <property type="entry name" value="Nucleotide-diphospho-sugar transferases"/>
    <property type="match status" value="1"/>
</dbReference>
<dbReference type="PROSITE" id="PS01295">
    <property type="entry name" value="ISPD"/>
    <property type="match status" value="1"/>
</dbReference>
<reference key="1">
    <citation type="journal article" date="2010" name="Genome Biol.">
        <title>Structure and dynamics of the pan-genome of Streptococcus pneumoniae and closely related species.</title>
        <authorList>
            <person name="Donati C."/>
            <person name="Hiller N.L."/>
            <person name="Tettelin H."/>
            <person name="Muzzi A."/>
            <person name="Croucher N.J."/>
            <person name="Angiuoli S.V."/>
            <person name="Oggioni M."/>
            <person name="Dunning Hotopp J.C."/>
            <person name="Hu F.Z."/>
            <person name="Riley D.R."/>
            <person name="Covacci A."/>
            <person name="Mitchell T.J."/>
            <person name="Bentley S.D."/>
            <person name="Kilian M."/>
            <person name="Ehrlich G.D."/>
            <person name="Rappuoli R."/>
            <person name="Moxon E.R."/>
            <person name="Masignani V."/>
        </authorList>
    </citation>
    <scope>NUCLEOTIDE SEQUENCE [LARGE SCALE GENOMIC DNA]</scope>
    <source>
        <strain>JJA</strain>
    </source>
</reference>
<keyword id="KW-0961">Cell wall biogenesis/degradation</keyword>
<keyword id="KW-0548">Nucleotidyltransferase</keyword>
<keyword id="KW-0777">Teichoic acid biosynthesis</keyword>
<keyword id="KW-0808">Transferase</keyword>
<accession>C1CEM5</accession>
<organism>
    <name type="scientific">Streptococcus pneumoniae (strain JJA)</name>
    <dbReference type="NCBI Taxonomy" id="488222"/>
    <lineage>
        <taxon>Bacteria</taxon>
        <taxon>Bacillati</taxon>
        <taxon>Bacillota</taxon>
        <taxon>Bacilli</taxon>
        <taxon>Lactobacillales</taxon>
        <taxon>Streptococcaceae</taxon>
        <taxon>Streptococcus</taxon>
    </lineage>
</organism>
<evidence type="ECO:0000255" key="1">
    <source>
        <dbReference type="HAMAP-Rule" id="MF_02068"/>
    </source>
</evidence>
<feature type="chain" id="PRO_1000191073" description="Ribitol-5-phosphate cytidylyltransferase">
    <location>
        <begin position="1"/>
        <end position="235"/>
    </location>
</feature>
<feature type="binding site" evidence="1">
    <location>
        <begin position="7"/>
        <end position="10"/>
    </location>
    <ligand>
        <name>CTP</name>
        <dbReference type="ChEBI" id="CHEBI:37563"/>
    </ligand>
</feature>
<feature type="binding site" evidence="1">
    <location>
        <begin position="82"/>
        <end position="88"/>
    </location>
    <ligand>
        <name>CTP</name>
        <dbReference type="ChEBI" id="CHEBI:37563"/>
    </ligand>
</feature>
<feature type="binding site" evidence="1">
    <location>
        <position position="113"/>
    </location>
    <ligand>
        <name>CTP</name>
        <dbReference type="ChEBI" id="CHEBI:37563"/>
    </ligand>
</feature>
<feature type="site" description="Transition state stabilizer" evidence="1">
    <location>
        <position position="14"/>
    </location>
</feature>
<feature type="site" description="Transition state stabilizer" evidence="1">
    <location>
        <position position="22"/>
    </location>
</feature>
<feature type="site" description="Positions ribitol 5-phosphate for the nucleophilic attack" evidence="1">
    <location>
        <position position="161"/>
    </location>
</feature>
<feature type="site" description="Positions ribitol 5-phosphate for the nucleophilic attack" evidence="1">
    <location>
        <position position="218"/>
    </location>
</feature>
<sequence>MIYAGILAGGTGTRMGISNLPKQFLELGDRPILIHTIEKFVLEPSIEKIVVGVHGDWVSHAEDLVDKYLPLYKERIIITKGGADRNTSIKKIIEAIDAYRPLTPEDIVVTHDSVRPFITLRMIQDNIQLAQNHDAVDTVVEAVDTIVESTNGQFITDIPNRAHLYQGQTPQTFRCKDFMDLYGSLSDEEKEILTDACKIFVIKGKDVALAKGEYSNLKITTVTDLKIAKSMIEKD</sequence>
<name>TARI_STRZJ</name>
<gene>
    <name evidence="1" type="primary">tarI</name>
    <name type="ordered locus">SPJ_1185</name>
</gene>
<proteinExistence type="inferred from homology"/>